<name>SURE_TRIEI</name>
<gene>
    <name evidence="1" type="primary">surE</name>
    <name type="ordered locus">Tery_3481</name>
</gene>
<protein>
    <recommendedName>
        <fullName evidence="1">5'-nucleotidase SurE</fullName>
        <ecNumber evidence="1">3.1.3.5</ecNumber>
    </recommendedName>
    <alternativeName>
        <fullName evidence="1">Nucleoside 5'-monophosphate phosphohydrolase</fullName>
    </alternativeName>
</protein>
<evidence type="ECO:0000255" key="1">
    <source>
        <dbReference type="HAMAP-Rule" id="MF_00060"/>
    </source>
</evidence>
<dbReference type="EC" id="3.1.3.5" evidence="1"/>
<dbReference type="EMBL" id="CP000393">
    <property type="protein sequence ID" value="ABG52571.1"/>
    <property type="molecule type" value="Genomic_DNA"/>
</dbReference>
<dbReference type="RefSeq" id="WP_011612913.1">
    <property type="nucleotide sequence ID" value="NC_008312.1"/>
</dbReference>
<dbReference type="SMR" id="Q10YV3"/>
<dbReference type="STRING" id="203124.Tery_3481"/>
<dbReference type="KEGG" id="ter:Tery_3481"/>
<dbReference type="eggNOG" id="COG0496">
    <property type="taxonomic scope" value="Bacteria"/>
</dbReference>
<dbReference type="HOGENOM" id="CLU_045192_1_3_3"/>
<dbReference type="OrthoDB" id="9780815at2"/>
<dbReference type="GO" id="GO:0005737">
    <property type="term" value="C:cytoplasm"/>
    <property type="evidence" value="ECO:0007669"/>
    <property type="project" value="UniProtKB-SubCell"/>
</dbReference>
<dbReference type="GO" id="GO:0008254">
    <property type="term" value="F:3'-nucleotidase activity"/>
    <property type="evidence" value="ECO:0007669"/>
    <property type="project" value="TreeGrafter"/>
</dbReference>
<dbReference type="GO" id="GO:0008253">
    <property type="term" value="F:5'-nucleotidase activity"/>
    <property type="evidence" value="ECO:0007669"/>
    <property type="project" value="UniProtKB-UniRule"/>
</dbReference>
<dbReference type="GO" id="GO:0004309">
    <property type="term" value="F:exopolyphosphatase activity"/>
    <property type="evidence" value="ECO:0007669"/>
    <property type="project" value="TreeGrafter"/>
</dbReference>
<dbReference type="GO" id="GO:0046872">
    <property type="term" value="F:metal ion binding"/>
    <property type="evidence" value="ECO:0007669"/>
    <property type="project" value="UniProtKB-UniRule"/>
</dbReference>
<dbReference type="GO" id="GO:0000166">
    <property type="term" value="F:nucleotide binding"/>
    <property type="evidence" value="ECO:0007669"/>
    <property type="project" value="UniProtKB-KW"/>
</dbReference>
<dbReference type="FunFam" id="3.40.1210.10:FF:000001">
    <property type="entry name" value="5'/3'-nucleotidase SurE"/>
    <property type="match status" value="1"/>
</dbReference>
<dbReference type="Gene3D" id="3.40.1210.10">
    <property type="entry name" value="Survival protein SurE-like phosphatase/nucleotidase"/>
    <property type="match status" value="1"/>
</dbReference>
<dbReference type="HAMAP" id="MF_00060">
    <property type="entry name" value="SurE"/>
    <property type="match status" value="1"/>
</dbReference>
<dbReference type="InterPro" id="IPR030048">
    <property type="entry name" value="SurE"/>
</dbReference>
<dbReference type="InterPro" id="IPR002828">
    <property type="entry name" value="SurE-like_Pase/nucleotidase"/>
</dbReference>
<dbReference type="InterPro" id="IPR036523">
    <property type="entry name" value="SurE-like_sf"/>
</dbReference>
<dbReference type="NCBIfam" id="NF001490">
    <property type="entry name" value="PRK00346.1-4"/>
    <property type="match status" value="1"/>
</dbReference>
<dbReference type="NCBIfam" id="NF001492">
    <property type="entry name" value="PRK00346.2-2"/>
    <property type="match status" value="1"/>
</dbReference>
<dbReference type="NCBIfam" id="TIGR00087">
    <property type="entry name" value="surE"/>
    <property type="match status" value="1"/>
</dbReference>
<dbReference type="PANTHER" id="PTHR30457">
    <property type="entry name" value="5'-NUCLEOTIDASE SURE"/>
    <property type="match status" value="1"/>
</dbReference>
<dbReference type="PANTHER" id="PTHR30457:SF12">
    <property type="entry name" value="5'_3'-NUCLEOTIDASE SURE"/>
    <property type="match status" value="1"/>
</dbReference>
<dbReference type="Pfam" id="PF01975">
    <property type="entry name" value="SurE"/>
    <property type="match status" value="1"/>
</dbReference>
<dbReference type="SUPFAM" id="SSF64167">
    <property type="entry name" value="SurE-like"/>
    <property type="match status" value="1"/>
</dbReference>
<accession>Q10YV3</accession>
<feature type="chain" id="PRO_1000007798" description="5'-nucleotidase SurE">
    <location>
        <begin position="1"/>
        <end position="268"/>
    </location>
</feature>
<feature type="binding site" evidence="1">
    <location>
        <position position="8"/>
    </location>
    <ligand>
        <name>a divalent metal cation</name>
        <dbReference type="ChEBI" id="CHEBI:60240"/>
    </ligand>
</feature>
<feature type="binding site" evidence="1">
    <location>
        <position position="9"/>
    </location>
    <ligand>
        <name>a divalent metal cation</name>
        <dbReference type="ChEBI" id="CHEBI:60240"/>
    </ligand>
</feature>
<feature type="binding site" evidence="1">
    <location>
        <position position="40"/>
    </location>
    <ligand>
        <name>a divalent metal cation</name>
        <dbReference type="ChEBI" id="CHEBI:60240"/>
    </ligand>
</feature>
<feature type="binding site" evidence="1">
    <location>
        <position position="98"/>
    </location>
    <ligand>
        <name>a divalent metal cation</name>
        <dbReference type="ChEBI" id="CHEBI:60240"/>
    </ligand>
</feature>
<sequence>MKILVSNDDGIFAEGIRSLANGLAAVGHEVFVVCPDKERSATGHGLTLHQPIRAEIVKSIFDDRITAWACSGTPADCVKLALFSLLETQPDLVLAGINHGPNLGTDIFYSGTVSAAMEGIVENIPSIAFSLGSYTSREFEVAVNFAQSLVQKIESQPLDNLMLLNVNIPAVKETEIAGVKITRQGVCRYIDIFKKRVDPRGKTYYWLAGELLEETEETKDQAIPDKYNTDVEAMREKYITITPLQYNLTYGRQLTYLQKWKIDNFSYN</sequence>
<proteinExistence type="inferred from homology"/>
<reference key="1">
    <citation type="journal article" date="2015" name="Proc. Natl. Acad. Sci. U.S.A.">
        <title>Trichodesmium genome maintains abundant, widespread noncoding DNA in situ, despite oligotrophic lifestyle.</title>
        <authorList>
            <person name="Walworth N."/>
            <person name="Pfreundt U."/>
            <person name="Nelson W.C."/>
            <person name="Mincer T."/>
            <person name="Heidelberg J.F."/>
            <person name="Fu F."/>
            <person name="Waterbury J.B."/>
            <person name="Glavina del Rio T."/>
            <person name="Goodwin L."/>
            <person name="Kyrpides N.C."/>
            <person name="Land M.L."/>
            <person name="Woyke T."/>
            <person name="Hutchins D.A."/>
            <person name="Hess W.R."/>
            <person name="Webb E.A."/>
        </authorList>
    </citation>
    <scope>NUCLEOTIDE SEQUENCE [LARGE SCALE GENOMIC DNA]</scope>
    <source>
        <strain>IMS101</strain>
    </source>
</reference>
<keyword id="KW-0963">Cytoplasm</keyword>
<keyword id="KW-0378">Hydrolase</keyword>
<keyword id="KW-0479">Metal-binding</keyword>
<keyword id="KW-0547">Nucleotide-binding</keyword>
<comment type="function">
    <text evidence="1">Nucleotidase that shows phosphatase activity on nucleoside 5'-monophosphates.</text>
</comment>
<comment type="catalytic activity">
    <reaction evidence="1">
        <text>a ribonucleoside 5'-phosphate + H2O = a ribonucleoside + phosphate</text>
        <dbReference type="Rhea" id="RHEA:12484"/>
        <dbReference type="ChEBI" id="CHEBI:15377"/>
        <dbReference type="ChEBI" id="CHEBI:18254"/>
        <dbReference type="ChEBI" id="CHEBI:43474"/>
        <dbReference type="ChEBI" id="CHEBI:58043"/>
        <dbReference type="EC" id="3.1.3.5"/>
    </reaction>
</comment>
<comment type="cofactor">
    <cofactor evidence="1">
        <name>a divalent metal cation</name>
        <dbReference type="ChEBI" id="CHEBI:60240"/>
    </cofactor>
    <text evidence="1">Binds 1 divalent metal cation per subunit.</text>
</comment>
<comment type="subcellular location">
    <subcellularLocation>
        <location evidence="1">Cytoplasm</location>
    </subcellularLocation>
</comment>
<comment type="similarity">
    <text evidence="1">Belongs to the SurE nucleotidase family.</text>
</comment>
<organism>
    <name type="scientific">Trichodesmium erythraeum (strain IMS101)</name>
    <dbReference type="NCBI Taxonomy" id="203124"/>
    <lineage>
        <taxon>Bacteria</taxon>
        <taxon>Bacillati</taxon>
        <taxon>Cyanobacteriota</taxon>
        <taxon>Cyanophyceae</taxon>
        <taxon>Oscillatoriophycideae</taxon>
        <taxon>Oscillatoriales</taxon>
        <taxon>Microcoleaceae</taxon>
        <taxon>Trichodesmium</taxon>
    </lineage>
</organism>